<keyword id="KW-0221">Differentiation</keyword>
<keyword id="KW-0472">Membrane</keyword>
<keyword id="KW-0539">Nucleus</keyword>
<keyword id="KW-0597">Phosphoprotein</keyword>
<keyword id="KW-1185">Reference proteome</keyword>
<keyword id="KW-0812">Transmembrane</keyword>
<keyword id="KW-1133">Transmembrane helix</keyword>
<comment type="function">
    <text evidence="1 5">May play a role in the process of maturation of dendritic cells (By similarity). Required for the development of cerebellar granule cells.</text>
</comment>
<comment type="subcellular location">
    <subcellularLocation>
        <location evidence="1">Nucleus membrane</location>
        <topology evidence="1">Multi-pass membrane protein</topology>
    </subcellularLocation>
</comment>
<comment type="tissue specificity">
    <text evidence="5">Ubiquitously expressed with higher expression in lung, liver, kidney and colon. Expressed in cerebellar granule cells.</text>
</comment>
<comment type="developmental stage">
    <text evidence="5">Expressed in the developing cerebellum at constant levels from 18 dpc to P7.</text>
</comment>
<comment type="disruption phenotype">
    <text evidence="5">Mice exhibit abnormal development of the cerebellum and severe ataxia.</text>
</comment>
<comment type="similarity">
    <text evidence="6">Belongs to the TMEM176 family.</text>
</comment>
<sequence>MVQSTVTVNGVKVASTHPQSAHISIHIHQKSALEQLLGAVGSLKKFLSWPQARIHYGQLSLGVTQILLGLVSCALGVCLYFGPWTELCAFGCAFWSGSVAILAGVGTIVHEKRQGKLSGQVSCLLLLACIATAAAATVLGVNSLIRQTSVPYYVEIFSTCNPLQSSMDPGYGTVRYSDDSDWKTERCREYLNMMMNLFLAFCIMLTVVCILEIVVSVASLGLSLRSMYGRSSQALNEEESERKLLDGHPAPASPAKEKIPAIL</sequence>
<reference key="1">
    <citation type="journal article" date="1999" name="Am. J. Respir. Cell Mol. Biol.">
        <title>Isolation of a gene product expressed by a subpopulation of human lung fibroblasts by differential display.</title>
        <authorList>
            <person name="Lurton J."/>
            <person name="Rose T.M."/>
            <person name="Raghu G."/>
            <person name="Narayanan A.S."/>
        </authorList>
    </citation>
    <scope>NUCLEOTIDE SEQUENCE [MRNA]</scope>
    <source>
        <tissue>Lung</tissue>
    </source>
</reference>
<reference key="2">
    <citation type="journal article" date="2006" name="Brain Res.">
        <title>Role of Clast1 in development of cerebellar granule cells.</title>
        <authorList>
            <person name="Maeda Y."/>
            <person name="Fujimura L."/>
            <person name="O-Wang J."/>
            <person name="Hatano M."/>
            <person name="Sakamoto A."/>
            <person name="Arima M."/>
            <person name="Ebara M."/>
            <person name="Ino H."/>
            <person name="Yamashita T."/>
            <person name="Saisho H."/>
            <person name="Tokuhisa T."/>
        </authorList>
    </citation>
    <scope>NUCLEOTIDE SEQUENCE [MRNA]</scope>
    <scope>FUNCTION</scope>
    <scope>TISSUE SPECIFICITY</scope>
    <scope>DEVELOPMENTAL STAGE</scope>
    <scope>DISRUPTION PHENOTYPE</scope>
    <source>
        <tissue>B-cell</tissue>
    </source>
</reference>
<reference key="3">
    <citation type="journal article" date="2005" name="Science">
        <title>The transcriptional landscape of the mammalian genome.</title>
        <authorList>
            <person name="Carninci P."/>
            <person name="Kasukawa T."/>
            <person name="Katayama S."/>
            <person name="Gough J."/>
            <person name="Frith M.C."/>
            <person name="Maeda N."/>
            <person name="Oyama R."/>
            <person name="Ravasi T."/>
            <person name="Lenhard B."/>
            <person name="Wells C."/>
            <person name="Kodzius R."/>
            <person name="Shimokawa K."/>
            <person name="Bajic V.B."/>
            <person name="Brenner S.E."/>
            <person name="Batalov S."/>
            <person name="Forrest A.R."/>
            <person name="Zavolan M."/>
            <person name="Davis M.J."/>
            <person name="Wilming L.G."/>
            <person name="Aidinis V."/>
            <person name="Allen J.E."/>
            <person name="Ambesi-Impiombato A."/>
            <person name="Apweiler R."/>
            <person name="Aturaliya R.N."/>
            <person name="Bailey T.L."/>
            <person name="Bansal M."/>
            <person name="Baxter L."/>
            <person name="Beisel K.W."/>
            <person name="Bersano T."/>
            <person name="Bono H."/>
            <person name="Chalk A.M."/>
            <person name="Chiu K.P."/>
            <person name="Choudhary V."/>
            <person name="Christoffels A."/>
            <person name="Clutterbuck D.R."/>
            <person name="Crowe M.L."/>
            <person name="Dalla E."/>
            <person name="Dalrymple B.P."/>
            <person name="de Bono B."/>
            <person name="Della Gatta G."/>
            <person name="di Bernardo D."/>
            <person name="Down T."/>
            <person name="Engstrom P."/>
            <person name="Fagiolini M."/>
            <person name="Faulkner G."/>
            <person name="Fletcher C.F."/>
            <person name="Fukushima T."/>
            <person name="Furuno M."/>
            <person name="Futaki S."/>
            <person name="Gariboldi M."/>
            <person name="Georgii-Hemming P."/>
            <person name="Gingeras T.R."/>
            <person name="Gojobori T."/>
            <person name="Green R.E."/>
            <person name="Gustincich S."/>
            <person name="Harbers M."/>
            <person name="Hayashi Y."/>
            <person name="Hensch T.K."/>
            <person name="Hirokawa N."/>
            <person name="Hill D."/>
            <person name="Huminiecki L."/>
            <person name="Iacono M."/>
            <person name="Ikeo K."/>
            <person name="Iwama A."/>
            <person name="Ishikawa T."/>
            <person name="Jakt M."/>
            <person name="Kanapin A."/>
            <person name="Katoh M."/>
            <person name="Kawasawa Y."/>
            <person name="Kelso J."/>
            <person name="Kitamura H."/>
            <person name="Kitano H."/>
            <person name="Kollias G."/>
            <person name="Krishnan S.P."/>
            <person name="Kruger A."/>
            <person name="Kummerfeld S.K."/>
            <person name="Kurochkin I.V."/>
            <person name="Lareau L.F."/>
            <person name="Lazarevic D."/>
            <person name="Lipovich L."/>
            <person name="Liu J."/>
            <person name="Liuni S."/>
            <person name="McWilliam S."/>
            <person name="Madan Babu M."/>
            <person name="Madera M."/>
            <person name="Marchionni L."/>
            <person name="Matsuda H."/>
            <person name="Matsuzawa S."/>
            <person name="Miki H."/>
            <person name="Mignone F."/>
            <person name="Miyake S."/>
            <person name="Morris K."/>
            <person name="Mottagui-Tabar S."/>
            <person name="Mulder N."/>
            <person name="Nakano N."/>
            <person name="Nakauchi H."/>
            <person name="Ng P."/>
            <person name="Nilsson R."/>
            <person name="Nishiguchi S."/>
            <person name="Nishikawa S."/>
            <person name="Nori F."/>
            <person name="Ohara O."/>
            <person name="Okazaki Y."/>
            <person name="Orlando V."/>
            <person name="Pang K.C."/>
            <person name="Pavan W.J."/>
            <person name="Pavesi G."/>
            <person name="Pesole G."/>
            <person name="Petrovsky N."/>
            <person name="Piazza S."/>
            <person name="Reed J."/>
            <person name="Reid J.F."/>
            <person name="Ring B.Z."/>
            <person name="Ringwald M."/>
            <person name="Rost B."/>
            <person name="Ruan Y."/>
            <person name="Salzberg S.L."/>
            <person name="Sandelin A."/>
            <person name="Schneider C."/>
            <person name="Schoenbach C."/>
            <person name="Sekiguchi K."/>
            <person name="Semple C.A."/>
            <person name="Seno S."/>
            <person name="Sessa L."/>
            <person name="Sheng Y."/>
            <person name="Shibata Y."/>
            <person name="Shimada H."/>
            <person name="Shimada K."/>
            <person name="Silva D."/>
            <person name="Sinclair B."/>
            <person name="Sperling S."/>
            <person name="Stupka E."/>
            <person name="Sugiura K."/>
            <person name="Sultana R."/>
            <person name="Takenaka Y."/>
            <person name="Taki K."/>
            <person name="Tammoja K."/>
            <person name="Tan S.L."/>
            <person name="Tang S."/>
            <person name="Taylor M.S."/>
            <person name="Tegner J."/>
            <person name="Teichmann S.A."/>
            <person name="Ueda H.R."/>
            <person name="van Nimwegen E."/>
            <person name="Verardo R."/>
            <person name="Wei C.L."/>
            <person name="Yagi K."/>
            <person name="Yamanishi H."/>
            <person name="Zabarovsky E."/>
            <person name="Zhu S."/>
            <person name="Zimmer A."/>
            <person name="Hide W."/>
            <person name="Bult C."/>
            <person name="Grimmond S.M."/>
            <person name="Teasdale R.D."/>
            <person name="Liu E.T."/>
            <person name="Brusic V."/>
            <person name="Quackenbush J."/>
            <person name="Wahlestedt C."/>
            <person name="Mattick J.S."/>
            <person name="Hume D.A."/>
            <person name="Kai C."/>
            <person name="Sasaki D."/>
            <person name="Tomaru Y."/>
            <person name="Fukuda S."/>
            <person name="Kanamori-Katayama M."/>
            <person name="Suzuki M."/>
            <person name="Aoki J."/>
            <person name="Arakawa T."/>
            <person name="Iida J."/>
            <person name="Imamura K."/>
            <person name="Itoh M."/>
            <person name="Kato T."/>
            <person name="Kawaji H."/>
            <person name="Kawagashira N."/>
            <person name="Kawashima T."/>
            <person name="Kojima M."/>
            <person name="Kondo S."/>
            <person name="Konno H."/>
            <person name="Nakano K."/>
            <person name="Ninomiya N."/>
            <person name="Nishio T."/>
            <person name="Okada M."/>
            <person name="Plessy C."/>
            <person name="Shibata K."/>
            <person name="Shiraki T."/>
            <person name="Suzuki S."/>
            <person name="Tagami M."/>
            <person name="Waki K."/>
            <person name="Watahiki A."/>
            <person name="Okamura-Oho Y."/>
            <person name="Suzuki H."/>
            <person name="Kawai J."/>
            <person name="Hayashizaki Y."/>
        </authorList>
    </citation>
    <scope>NUCLEOTIDE SEQUENCE [LARGE SCALE MRNA]</scope>
    <source>
        <strain>C57BL/6J</strain>
        <strain>NOD</strain>
        <tissue>Pancreas</tissue>
        <tissue>Spleen</tissue>
    </source>
</reference>
<reference key="4">
    <citation type="submission" date="2005-07" db="EMBL/GenBank/DDBJ databases">
        <title>Cloning of mouse full open reading frames in Gateway(R) system entry vector (pDONR201).</title>
        <authorList>
            <person name="Ebert L."/>
            <person name="Muenstermann E."/>
            <person name="Schatten R."/>
            <person name="Henze S."/>
            <person name="Bohn E."/>
            <person name="Mollenhauer J."/>
            <person name="Wiemann S."/>
            <person name="Schick M."/>
            <person name="Korn B."/>
        </authorList>
    </citation>
    <scope>NUCLEOTIDE SEQUENCE [LARGE SCALE MRNA]</scope>
</reference>
<reference key="5">
    <citation type="journal article" date="2004" name="Genome Res.">
        <title>The status, quality, and expansion of the NIH full-length cDNA project: the Mammalian Gene Collection (MGC).</title>
        <authorList>
            <consortium name="The MGC Project Team"/>
        </authorList>
    </citation>
    <scope>NUCLEOTIDE SEQUENCE [LARGE SCALE MRNA]</scope>
    <source>
        <strain>FVB/N</strain>
        <tissue>Kidney</tissue>
        <tissue>Mammary tumor</tissue>
    </source>
</reference>
<reference key="6">
    <citation type="journal article" date="2009" name="Immunity">
        <title>The phagosomal proteome in interferon-gamma-activated macrophages.</title>
        <authorList>
            <person name="Trost M."/>
            <person name="English L."/>
            <person name="Lemieux S."/>
            <person name="Courcelles M."/>
            <person name="Desjardins M."/>
            <person name="Thibault P."/>
        </authorList>
    </citation>
    <scope>PHOSPHORYLATION [LARGE SCALE ANALYSIS] AT SER-253</scope>
    <scope>IDENTIFICATION BY MASS SPECTROMETRY [LARGE SCALE ANALYSIS]</scope>
</reference>
<reference key="7">
    <citation type="journal article" date="2010" name="Cell">
        <title>A tissue-specific atlas of mouse protein phosphorylation and expression.</title>
        <authorList>
            <person name="Huttlin E.L."/>
            <person name="Jedrychowski M.P."/>
            <person name="Elias J.E."/>
            <person name="Goswami T."/>
            <person name="Rad R."/>
            <person name="Beausoleil S.A."/>
            <person name="Villen J."/>
            <person name="Haas W."/>
            <person name="Sowa M.E."/>
            <person name="Gygi S.P."/>
        </authorList>
    </citation>
    <scope>IDENTIFICATION BY MASS SPECTROMETRY [LARGE SCALE ANALYSIS]</scope>
    <source>
        <tissue>Kidney</tissue>
        <tissue>Liver</tissue>
        <tissue>Lung</tissue>
        <tissue>Pancreas</tissue>
    </source>
</reference>
<dbReference type="EMBL" id="AF115426">
    <property type="protein sequence ID" value="AAD28721.1"/>
    <property type="molecule type" value="mRNA"/>
</dbReference>
<dbReference type="EMBL" id="AB031386">
    <property type="protein sequence ID" value="BAA83596.1"/>
    <property type="molecule type" value="mRNA"/>
</dbReference>
<dbReference type="EMBL" id="AK007408">
    <property type="protein sequence ID" value="BAB25020.1"/>
    <property type="molecule type" value="mRNA"/>
</dbReference>
<dbReference type="EMBL" id="AK156042">
    <property type="protein sequence ID" value="BAE33560.1"/>
    <property type="molecule type" value="mRNA"/>
</dbReference>
<dbReference type="EMBL" id="CT010176">
    <property type="protein sequence ID" value="CAJ18384.1"/>
    <property type="molecule type" value="mRNA"/>
</dbReference>
<dbReference type="EMBL" id="BC019539">
    <property type="protein sequence ID" value="AAH19539.1"/>
    <property type="molecule type" value="mRNA"/>
</dbReference>
<dbReference type="EMBL" id="BC022166">
    <property type="protein sequence ID" value="AAH22166.1"/>
    <property type="molecule type" value="mRNA"/>
</dbReference>
<dbReference type="CCDS" id="CCDS20116.1"/>
<dbReference type="RefSeq" id="NP_001157679.1">
    <property type="nucleotide sequence ID" value="NM_001164207.1"/>
</dbReference>
<dbReference type="RefSeq" id="NP_001157680.1">
    <property type="nucleotide sequence ID" value="NM_001164208.1"/>
</dbReference>
<dbReference type="RefSeq" id="NP_001157681.1">
    <property type="nucleotide sequence ID" value="NM_001164209.2"/>
</dbReference>
<dbReference type="RefSeq" id="NP_001273580.1">
    <property type="nucleotide sequence ID" value="NM_001286651.1"/>
</dbReference>
<dbReference type="RefSeq" id="NP_001273581.1">
    <property type="nucleotide sequence ID" value="NM_001286652.1"/>
</dbReference>
<dbReference type="RefSeq" id="NP_075543.1">
    <property type="nucleotide sequence ID" value="NM_023056.4"/>
</dbReference>
<dbReference type="RefSeq" id="XP_006506519.1">
    <property type="nucleotide sequence ID" value="XM_006506456.5"/>
</dbReference>
<dbReference type="RefSeq" id="XP_006506520.1">
    <property type="nucleotide sequence ID" value="XM_006506457.5"/>
</dbReference>
<dbReference type="RefSeq" id="XP_006506521.1">
    <property type="nucleotide sequence ID" value="XM_006506458.4"/>
</dbReference>
<dbReference type="RefSeq" id="XP_006506522.1">
    <property type="nucleotide sequence ID" value="XM_006506459.5"/>
</dbReference>
<dbReference type="RefSeq" id="XP_006506523.1">
    <property type="nucleotide sequence ID" value="XM_006506460.5"/>
</dbReference>
<dbReference type="RefSeq" id="XP_006506524.1">
    <property type="nucleotide sequence ID" value="XM_006506461.3"/>
</dbReference>
<dbReference type="RefSeq" id="XP_017177199.1">
    <property type="nucleotide sequence ID" value="XM_017321710.3"/>
</dbReference>
<dbReference type="RefSeq" id="XP_030111391.1">
    <property type="nucleotide sequence ID" value="XM_030255531.2"/>
</dbReference>
<dbReference type="RefSeq" id="XP_030111392.1">
    <property type="nucleotide sequence ID" value="XM_030255532.2"/>
</dbReference>
<dbReference type="RefSeq" id="XP_030111393.1">
    <property type="nucleotide sequence ID" value="XM_030255533.2"/>
</dbReference>
<dbReference type="RefSeq" id="XP_030111394.1">
    <property type="nucleotide sequence ID" value="XM_030255534.2"/>
</dbReference>
<dbReference type="RefSeq" id="XP_030111395.1">
    <property type="nucleotide sequence ID" value="XM_030255535.2"/>
</dbReference>
<dbReference type="RefSeq" id="XP_036008153.1">
    <property type="nucleotide sequence ID" value="XM_036152260.1"/>
</dbReference>
<dbReference type="BioGRID" id="211160">
    <property type="interactions" value="2"/>
</dbReference>
<dbReference type="FunCoup" id="Q9R1Q6">
    <property type="interactions" value="1"/>
</dbReference>
<dbReference type="STRING" id="10090.ENSMUSP00000128705"/>
<dbReference type="iPTMnet" id="Q9R1Q6"/>
<dbReference type="PhosphoSitePlus" id="Q9R1Q6"/>
<dbReference type="SwissPalm" id="Q9R1Q6"/>
<dbReference type="jPOST" id="Q9R1Q6"/>
<dbReference type="PaxDb" id="10090-ENSMUSP00000128705"/>
<dbReference type="PeptideAtlas" id="Q9R1Q6"/>
<dbReference type="ProteomicsDB" id="263223"/>
<dbReference type="Pumba" id="Q9R1Q6"/>
<dbReference type="Antibodypedia" id="32900">
    <property type="antibodies" value="92 antibodies from 19 providers"/>
</dbReference>
<dbReference type="DNASU" id="65963"/>
<dbReference type="Ensembl" id="ENSMUST00000101429.11">
    <property type="protein sequence ID" value="ENSMUSP00000098972.5"/>
    <property type="gene ID" value="ENSMUSG00000029810.16"/>
</dbReference>
<dbReference type="Ensembl" id="ENSMUST00000164733.4">
    <property type="protein sequence ID" value="ENSMUSP00000128705.2"/>
    <property type="gene ID" value="ENSMUSG00000029810.16"/>
</dbReference>
<dbReference type="Ensembl" id="ENSMUST00000166247.8">
    <property type="protein sequence ID" value="ENSMUSP00000131064.2"/>
    <property type="gene ID" value="ENSMUSG00000029810.16"/>
</dbReference>
<dbReference type="Ensembl" id="ENSMUST00000203355.3">
    <property type="protein sequence ID" value="ENSMUSP00000145395.2"/>
    <property type="gene ID" value="ENSMUSG00000029810.16"/>
</dbReference>
<dbReference type="Ensembl" id="ENSMUST00000204073.3">
    <property type="protein sequence ID" value="ENSMUSP00000144864.2"/>
    <property type="gene ID" value="ENSMUSG00000029810.16"/>
</dbReference>
<dbReference type="GeneID" id="65963"/>
<dbReference type="KEGG" id="mmu:65963"/>
<dbReference type="UCSC" id="uc009bvu.3">
    <property type="organism name" value="mouse"/>
</dbReference>
<dbReference type="AGR" id="MGI:1916348"/>
<dbReference type="CTD" id="28959"/>
<dbReference type="MGI" id="MGI:1916348">
    <property type="gene designation" value="Tmem176b"/>
</dbReference>
<dbReference type="VEuPathDB" id="HostDB:ENSMUSG00000029810"/>
<dbReference type="eggNOG" id="ENOG502SF8T">
    <property type="taxonomic scope" value="Eukaryota"/>
</dbReference>
<dbReference type="GeneTree" id="ENSGT00530000064074"/>
<dbReference type="HOGENOM" id="CLU_090530_0_0_1"/>
<dbReference type="InParanoid" id="Q9R1Q6"/>
<dbReference type="OMA" id="WEEDRCR"/>
<dbReference type="OrthoDB" id="8951938at2759"/>
<dbReference type="PhylomeDB" id="Q9R1Q6"/>
<dbReference type="TreeFam" id="TF335389"/>
<dbReference type="BioGRID-ORCS" id="65963">
    <property type="hits" value="4 hits in 79 CRISPR screens"/>
</dbReference>
<dbReference type="ChiTaRS" id="Tmem176b">
    <property type="organism name" value="mouse"/>
</dbReference>
<dbReference type="PRO" id="PR:Q9R1Q6"/>
<dbReference type="Proteomes" id="UP000000589">
    <property type="component" value="Chromosome 6"/>
</dbReference>
<dbReference type="RNAct" id="Q9R1Q6">
    <property type="molecule type" value="protein"/>
</dbReference>
<dbReference type="Bgee" id="ENSMUSG00000029810">
    <property type="expression patterns" value="Expressed in right kidney and 276 other cell types or tissues"/>
</dbReference>
<dbReference type="ExpressionAtlas" id="Q9R1Q6">
    <property type="expression patterns" value="baseline and differential"/>
</dbReference>
<dbReference type="GO" id="GO:0031965">
    <property type="term" value="C:nuclear membrane"/>
    <property type="evidence" value="ECO:0007669"/>
    <property type="project" value="UniProtKB-SubCell"/>
</dbReference>
<dbReference type="GO" id="GO:0097028">
    <property type="term" value="P:dendritic cell differentiation"/>
    <property type="evidence" value="ECO:0000315"/>
    <property type="project" value="MGI"/>
</dbReference>
<dbReference type="GO" id="GO:2001199">
    <property type="term" value="P:negative regulation of dendritic cell differentiation"/>
    <property type="evidence" value="ECO:0000315"/>
    <property type="project" value="MGI"/>
</dbReference>
<dbReference type="InterPro" id="IPR007237">
    <property type="entry name" value="CD20-like"/>
</dbReference>
<dbReference type="InterPro" id="IPR009281">
    <property type="entry name" value="TMEM176A/TMEM176B"/>
</dbReference>
<dbReference type="PANTHER" id="PTHR15756">
    <property type="entry name" value="LR8/HCA112"/>
    <property type="match status" value="1"/>
</dbReference>
<dbReference type="PANTHER" id="PTHR15756:SF7">
    <property type="entry name" value="TRANSMEMBRANE PROTEIN 176B"/>
    <property type="match status" value="1"/>
</dbReference>
<dbReference type="Pfam" id="PF04103">
    <property type="entry name" value="CD20"/>
    <property type="match status" value="1"/>
</dbReference>
<organism>
    <name type="scientific">Mus musculus</name>
    <name type="common">Mouse</name>
    <dbReference type="NCBI Taxonomy" id="10090"/>
    <lineage>
        <taxon>Eukaryota</taxon>
        <taxon>Metazoa</taxon>
        <taxon>Chordata</taxon>
        <taxon>Craniata</taxon>
        <taxon>Vertebrata</taxon>
        <taxon>Euteleostomi</taxon>
        <taxon>Mammalia</taxon>
        <taxon>Eutheria</taxon>
        <taxon>Euarchontoglires</taxon>
        <taxon>Glires</taxon>
        <taxon>Rodentia</taxon>
        <taxon>Myomorpha</taxon>
        <taxon>Muroidea</taxon>
        <taxon>Muridae</taxon>
        <taxon>Murinae</taxon>
        <taxon>Mus</taxon>
        <taxon>Mus</taxon>
    </lineage>
</organism>
<accession>Q9R1Q6</accession>
<accession>Q9WU52</accession>
<evidence type="ECO:0000250" key="1"/>
<evidence type="ECO:0000250" key="2">
    <source>
        <dbReference type="UniProtKB" id="Q3YBM2"/>
    </source>
</evidence>
<evidence type="ECO:0000255" key="3"/>
<evidence type="ECO:0000256" key="4">
    <source>
        <dbReference type="SAM" id="MobiDB-lite"/>
    </source>
</evidence>
<evidence type="ECO:0000269" key="5">
    <source>
    </source>
</evidence>
<evidence type="ECO:0000305" key="6"/>
<evidence type="ECO:0007744" key="7">
    <source>
    </source>
</evidence>
<name>T176B_MOUSE</name>
<proteinExistence type="evidence at protein level"/>
<protein>
    <recommendedName>
        <fullName>Transmembrane protein 176B</fullName>
    </recommendedName>
    <alternativeName>
        <fullName>Protein LR8</fullName>
    </alternativeName>
</protein>
<feature type="chain" id="PRO_0000279876" description="Transmembrane protein 176B">
    <location>
        <begin position="1"/>
        <end position="263"/>
    </location>
</feature>
<feature type="transmembrane region" description="Helical" evidence="3">
    <location>
        <begin position="61"/>
        <end position="81"/>
    </location>
</feature>
<feature type="transmembrane region" description="Helical" evidence="3">
    <location>
        <begin position="89"/>
        <end position="109"/>
    </location>
</feature>
<feature type="transmembrane region" description="Helical" evidence="3">
    <location>
        <begin position="121"/>
        <end position="141"/>
    </location>
</feature>
<feature type="transmembrane region" description="Helical" evidence="3">
    <location>
        <begin position="197"/>
        <end position="217"/>
    </location>
</feature>
<feature type="region of interest" description="Disordered" evidence="4">
    <location>
        <begin position="239"/>
        <end position="263"/>
    </location>
</feature>
<feature type="modified residue" description="Phosphoserine" evidence="2">
    <location>
        <position position="231"/>
    </location>
</feature>
<feature type="modified residue" description="Phosphoserine" evidence="2">
    <location>
        <position position="240"/>
    </location>
</feature>
<feature type="modified residue" description="Phosphoserine" evidence="7">
    <location>
        <position position="253"/>
    </location>
</feature>
<feature type="sequence conflict" description="In Ref. 1; AAD28721." evidence="6" ref="1">
    <original>I</original>
    <variation>V</variation>
    <location>
        <position position="54"/>
    </location>
</feature>
<feature type="sequence conflict" description="In Ref. 1; AAD28721." evidence="6" ref="1">
    <original>P</original>
    <variation>S</variation>
    <location>
        <position position="260"/>
    </location>
</feature>
<gene>
    <name type="primary">Tmem176b</name>
    <name type="synonym">Clast1</name>
    <name type="synonym">Lr8</name>
</gene>